<comment type="subcellular location">
    <subcellularLocation>
        <location>Plastid</location>
        <location>Chloroplast</location>
    </subcellularLocation>
</comment>
<comment type="similarity">
    <text evidence="1">Belongs to the bacterial ribosomal protein bL32 family.</text>
</comment>
<name>RK32_DRIGR</name>
<gene>
    <name evidence="1" type="primary">rpl32</name>
</gene>
<geneLocation type="chloroplast"/>
<proteinExistence type="inferred from homology"/>
<sequence length="57" mass="6512">MTVPKKRTSMSKKRIRKNIWKRKGYWAALKALSLAKSISTGHSKSFFVQQTSNKAAE</sequence>
<organism>
    <name type="scientific">Drimys granadensis</name>
    <dbReference type="NCBI Taxonomy" id="224735"/>
    <lineage>
        <taxon>Eukaryota</taxon>
        <taxon>Viridiplantae</taxon>
        <taxon>Streptophyta</taxon>
        <taxon>Embryophyta</taxon>
        <taxon>Tracheophyta</taxon>
        <taxon>Spermatophyta</taxon>
        <taxon>Magnoliopsida</taxon>
        <taxon>Magnoliidae</taxon>
        <taxon>Canellales</taxon>
        <taxon>Winteraceae</taxon>
        <taxon>Drimys</taxon>
    </lineage>
</organism>
<evidence type="ECO:0000255" key="1">
    <source>
        <dbReference type="HAMAP-Rule" id="MF_00340"/>
    </source>
</evidence>
<evidence type="ECO:0000305" key="2"/>
<feature type="chain" id="PRO_0000276467" description="Large ribosomal subunit protein bL32c">
    <location>
        <begin position="1"/>
        <end position="57"/>
    </location>
</feature>
<keyword id="KW-0150">Chloroplast</keyword>
<keyword id="KW-0934">Plastid</keyword>
<keyword id="KW-0687">Ribonucleoprotein</keyword>
<keyword id="KW-0689">Ribosomal protein</keyword>
<reference key="1">
    <citation type="journal article" date="2006" name="BMC Evol. Biol.">
        <title>Complete plastid genome sequences of Drimys, Liriodendron, and Piper: implications for the phylogenetic relationships of magnoliids.</title>
        <authorList>
            <person name="Cai Z."/>
            <person name="Penaflor C."/>
            <person name="Kuehl J.V."/>
            <person name="Leebens-Mack J."/>
            <person name="Carlson J.E."/>
            <person name="dePamphilis C.W."/>
            <person name="Boore J.L."/>
            <person name="Jansen R.K."/>
        </authorList>
    </citation>
    <scope>NUCLEOTIDE SEQUENCE [LARGE SCALE GENOMIC DNA]</scope>
</reference>
<protein>
    <recommendedName>
        <fullName evidence="1">Large ribosomal subunit protein bL32c</fullName>
    </recommendedName>
    <alternativeName>
        <fullName evidence="2">50S ribosomal protein L32, chloroplastic</fullName>
    </alternativeName>
</protein>
<accession>Q06GU8</accession>
<dbReference type="EMBL" id="DQ887676">
    <property type="protein sequence ID" value="ABH88346.1"/>
    <property type="molecule type" value="Genomic_DNA"/>
</dbReference>
<dbReference type="RefSeq" id="YP_784435.1">
    <property type="nucleotide sequence ID" value="NC_008456.1"/>
</dbReference>
<dbReference type="SMR" id="Q06GU8"/>
<dbReference type="GeneID" id="4363555"/>
<dbReference type="GO" id="GO:0009507">
    <property type="term" value="C:chloroplast"/>
    <property type="evidence" value="ECO:0007669"/>
    <property type="project" value="UniProtKB-SubCell"/>
</dbReference>
<dbReference type="GO" id="GO:0015934">
    <property type="term" value="C:large ribosomal subunit"/>
    <property type="evidence" value="ECO:0007669"/>
    <property type="project" value="InterPro"/>
</dbReference>
<dbReference type="GO" id="GO:0003735">
    <property type="term" value="F:structural constituent of ribosome"/>
    <property type="evidence" value="ECO:0007669"/>
    <property type="project" value="InterPro"/>
</dbReference>
<dbReference type="GO" id="GO:0006412">
    <property type="term" value="P:translation"/>
    <property type="evidence" value="ECO:0007669"/>
    <property type="project" value="UniProtKB-UniRule"/>
</dbReference>
<dbReference type="HAMAP" id="MF_00340">
    <property type="entry name" value="Ribosomal_bL32"/>
    <property type="match status" value="1"/>
</dbReference>
<dbReference type="InterPro" id="IPR002677">
    <property type="entry name" value="Ribosomal_bL32"/>
</dbReference>
<dbReference type="InterPro" id="IPR044958">
    <property type="entry name" value="Ribosomal_bL32_plant/cyanobact"/>
</dbReference>
<dbReference type="PANTHER" id="PTHR36083">
    <property type="entry name" value="50S RIBOSOMAL PROTEIN L32, CHLOROPLASTIC"/>
    <property type="match status" value="1"/>
</dbReference>
<dbReference type="PANTHER" id="PTHR36083:SF1">
    <property type="entry name" value="LARGE RIBOSOMAL SUBUNIT PROTEIN BL32C"/>
    <property type="match status" value="1"/>
</dbReference>